<accession>A5CX71</accession>
<reference key="1">
    <citation type="journal article" date="2007" name="Curr. Biol.">
        <title>Reduced genome of the thioautotrophic intracellular symbiont in a deep-sea clam, Calyptogena okutanii.</title>
        <authorList>
            <person name="Kuwahara H."/>
            <person name="Yoshida T."/>
            <person name="Takaki Y."/>
            <person name="Shimamura S."/>
            <person name="Nishi S."/>
            <person name="Harada M."/>
            <person name="Matsuyama K."/>
            <person name="Takishita K."/>
            <person name="Kawato M."/>
            <person name="Uematsu K."/>
            <person name="Fujiwara Y."/>
            <person name="Sato T."/>
            <person name="Kato C."/>
            <person name="Kitagawa M."/>
            <person name="Kato I."/>
            <person name="Maruyama T."/>
        </authorList>
    </citation>
    <scope>NUCLEOTIDE SEQUENCE [LARGE SCALE GENOMIC DNA]</scope>
    <source>
        <strain>HA</strain>
    </source>
</reference>
<protein>
    <recommendedName>
        <fullName evidence="1">Enolase</fullName>
        <ecNumber evidence="1">4.2.1.11</ecNumber>
    </recommendedName>
    <alternativeName>
        <fullName evidence="1">2-phospho-D-glycerate hydro-lyase</fullName>
    </alternativeName>
    <alternativeName>
        <fullName evidence="1">2-phosphoglycerate dehydratase</fullName>
    </alternativeName>
</protein>
<keyword id="KW-0963">Cytoplasm</keyword>
<keyword id="KW-0324">Glycolysis</keyword>
<keyword id="KW-0456">Lyase</keyword>
<keyword id="KW-0460">Magnesium</keyword>
<keyword id="KW-0479">Metal-binding</keyword>
<keyword id="KW-1185">Reference proteome</keyword>
<keyword id="KW-0964">Secreted</keyword>
<gene>
    <name evidence="1" type="primary">eno</name>
    <name type="ordered locus">COSY_0332</name>
</gene>
<sequence>MEIKQIKAREVIDSRGNPTVEADVILNDDTIGSAMVPSGASTGQKEALELRDRDKSRYLGKGVLKAVKFVNTEICDTLIGFDINNLSKIDQTMIDLDGTKTKSRLGANTILSVSLAAAHANANRQHKPLYASLNQGGNYKLPVPMMNIINGGEHANNNIDIQEFMIIPVGAPSFKEALRYGIEVFHHLKSILEIKGMSTTVGDEGGFAPNLASNEDAIKIILEAINNAGYKPGKDIFIGIDAASSEFYDNDNKTYNLISENKSFSSEEFVNYLAKWVENYPIISIEDGMDENDWNGWNLLTKKLGDKVQLVGDDLYVTNSKILKQGIERNIANSILIKVNQIGTLTETFATIKVAMNARYTSIMSHRSGETEDTTIADLAVACTCSQIKTGSLSRSDRLAKYNRLLRIEEELGTQAVYPGLNAFNHLN</sequence>
<comment type="function">
    <text evidence="1">Catalyzes the reversible conversion of 2-phosphoglycerate (2-PG) into phosphoenolpyruvate (PEP). It is essential for the degradation of carbohydrates via glycolysis.</text>
</comment>
<comment type="catalytic activity">
    <reaction evidence="1">
        <text>(2R)-2-phosphoglycerate = phosphoenolpyruvate + H2O</text>
        <dbReference type="Rhea" id="RHEA:10164"/>
        <dbReference type="ChEBI" id="CHEBI:15377"/>
        <dbReference type="ChEBI" id="CHEBI:58289"/>
        <dbReference type="ChEBI" id="CHEBI:58702"/>
        <dbReference type="EC" id="4.2.1.11"/>
    </reaction>
</comment>
<comment type="cofactor">
    <cofactor evidence="1">
        <name>Mg(2+)</name>
        <dbReference type="ChEBI" id="CHEBI:18420"/>
    </cofactor>
    <text evidence="1">Binds a second Mg(2+) ion via substrate during catalysis.</text>
</comment>
<comment type="pathway">
    <text evidence="1">Carbohydrate degradation; glycolysis; pyruvate from D-glyceraldehyde 3-phosphate: step 4/5.</text>
</comment>
<comment type="subunit">
    <text evidence="1">Component of the RNA degradosome, a multiprotein complex involved in RNA processing and mRNA degradation.</text>
</comment>
<comment type="subcellular location">
    <subcellularLocation>
        <location evidence="1">Cytoplasm</location>
    </subcellularLocation>
    <subcellularLocation>
        <location evidence="1">Secreted</location>
    </subcellularLocation>
    <subcellularLocation>
        <location evidence="1">Cell surface</location>
    </subcellularLocation>
    <text evidence="1">Fractions of enolase are present in both the cytoplasm and on the cell surface.</text>
</comment>
<comment type="similarity">
    <text evidence="1">Belongs to the enolase family.</text>
</comment>
<name>ENO_VESOH</name>
<evidence type="ECO:0000255" key="1">
    <source>
        <dbReference type="HAMAP-Rule" id="MF_00318"/>
    </source>
</evidence>
<dbReference type="EC" id="4.2.1.11" evidence="1"/>
<dbReference type="EMBL" id="AP009247">
    <property type="protein sequence ID" value="BAF61457.1"/>
    <property type="molecule type" value="Genomic_DNA"/>
</dbReference>
<dbReference type="RefSeq" id="WP_011929727.1">
    <property type="nucleotide sequence ID" value="NC_009465.1"/>
</dbReference>
<dbReference type="SMR" id="A5CX71"/>
<dbReference type="STRING" id="412965.COSY_0332"/>
<dbReference type="KEGG" id="vok:COSY_0332"/>
<dbReference type="eggNOG" id="COG0148">
    <property type="taxonomic scope" value="Bacteria"/>
</dbReference>
<dbReference type="HOGENOM" id="CLU_031223_2_1_6"/>
<dbReference type="OrthoDB" id="9804716at2"/>
<dbReference type="UniPathway" id="UPA00109">
    <property type="reaction ID" value="UER00187"/>
</dbReference>
<dbReference type="Proteomes" id="UP000000247">
    <property type="component" value="Chromosome"/>
</dbReference>
<dbReference type="GO" id="GO:0009986">
    <property type="term" value="C:cell surface"/>
    <property type="evidence" value="ECO:0007669"/>
    <property type="project" value="UniProtKB-SubCell"/>
</dbReference>
<dbReference type="GO" id="GO:0005576">
    <property type="term" value="C:extracellular region"/>
    <property type="evidence" value="ECO:0007669"/>
    <property type="project" value="UniProtKB-SubCell"/>
</dbReference>
<dbReference type="GO" id="GO:0000015">
    <property type="term" value="C:phosphopyruvate hydratase complex"/>
    <property type="evidence" value="ECO:0007669"/>
    <property type="project" value="InterPro"/>
</dbReference>
<dbReference type="GO" id="GO:0000287">
    <property type="term" value="F:magnesium ion binding"/>
    <property type="evidence" value="ECO:0007669"/>
    <property type="project" value="UniProtKB-UniRule"/>
</dbReference>
<dbReference type="GO" id="GO:0004634">
    <property type="term" value="F:phosphopyruvate hydratase activity"/>
    <property type="evidence" value="ECO:0007669"/>
    <property type="project" value="UniProtKB-UniRule"/>
</dbReference>
<dbReference type="GO" id="GO:0006096">
    <property type="term" value="P:glycolytic process"/>
    <property type="evidence" value="ECO:0007669"/>
    <property type="project" value="UniProtKB-UniRule"/>
</dbReference>
<dbReference type="CDD" id="cd03313">
    <property type="entry name" value="enolase"/>
    <property type="match status" value="1"/>
</dbReference>
<dbReference type="FunFam" id="3.20.20.120:FF:000001">
    <property type="entry name" value="Enolase"/>
    <property type="match status" value="1"/>
</dbReference>
<dbReference type="FunFam" id="3.30.390.10:FF:000001">
    <property type="entry name" value="Enolase"/>
    <property type="match status" value="1"/>
</dbReference>
<dbReference type="Gene3D" id="3.20.20.120">
    <property type="entry name" value="Enolase-like C-terminal domain"/>
    <property type="match status" value="1"/>
</dbReference>
<dbReference type="Gene3D" id="3.30.390.10">
    <property type="entry name" value="Enolase-like, N-terminal domain"/>
    <property type="match status" value="1"/>
</dbReference>
<dbReference type="HAMAP" id="MF_00318">
    <property type="entry name" value="Enolase"/>
    <property type="match status" value="1"/>
</dbReference>
<dbReference type="InterPro" id="IPR000941">
    <property type="entry name" value="Enolase"/>
</dbReference>
<dbReference type="InterPro" id="IPR036849">
    <property type="entry name" value="Enolase-like_C_sf"/>
</dbReference>
<dbReference type="InterPro" id="IPR029017">
    <property type="entry name" value="Enolase-like_N"/>
</dbReference>
<dbReference type="InterPro" id="IPR020810">
    <property type="entry name" value="Enolase_C"/>
</dbReference>
<dbReference type="InterPro" id="IPR020809">
    <property type="entry name" value="Enolase_CS"/>
</dbReference>
<dbReference type="InterPro" id="IPR020811">
    <property type="entry name" value="Enolase_N"/>
</dbReference>
<dbReference type="NCBIfam" id="TIGR01060">
    <property type="entry name" value="eno"/>
    <property type="match status" value="1"/>
</dbReference>
<dbReference type="PANTHER" id="PTHR11902">
    <property type="entry name" value="ENOLASE"/>
    <property type="match status" value="1"/>
</dbReference>
<dbReference type="PANTHER" id="PTHR11902:SF1">
    <property type="entry name" value="ENOLASE"/>
    <property type="match status" value="1"/>
</dbReference>
<dbReference type="Pfam" id="PF00113">
    <property type="entry name" value="Enolase_C"/>
    <property type="match status" value="1"/>
</dbReference>
<dbReference type="Pfam" id="PF03952">
    <property type="entry name" value="Enolase_N"/>
    <property type="match status" value="1"/>
</dbReference>
<dbReference type="PIRSF" id="PIRSF001400">
    <property type="entry name" value="Enolase"/>
    <property type="match status" value="1"/>
</dbReference>
<dbReference type="PRINTS" id="PR00148">
    <property type="entry name" value="ENOLASE"/>
</dbReference>
<dbReference type="SFLD" id="SFLDF00002">
    <property type="entry name" value="enolase"/>
    <property type="match status" value="1"/>
</dbReference>
<dbReference type="SFLD" id="SFLDG00178">
    <property type="entry name" value="enolase"/>
    <property type="match status" value="1"/>
</dbReference>
<dbReference type="SMART" id="SM01192">
    <property type="entry name" value="Enolase_C"/>
    <property type="match status" value="1"/>
</dbReference>
<dbReference type="SMART" id="SM01193">
    <property type="entry name" value="Enolase_N"/>
    <property type="match status" value="1"/>
</dbReference>
<dbReference type="SUPFAM" id="SSF51604">
    <property type="entry name" value="Enolase C-terminal domain-like"/>
    <property type="match status" value="1"/>
</dbReference>
<dbReference type="SUPFAM" id="SSF54826">
    <property type="entry name" value="Enolase N-terminal domain-like"/>
    <property type="match status" value="1"/>
</dbReference>
<dbReference type="PROSITE" id="PS00164">
    <property type="entry name" value="ENOLASE"/>
    <property type="match status" value="1"/>
</dbReference>
<feature type="chain" id="PRO_0000337621" description="Enolase">
    <location>
        <begin position="1"/>
        <end position="428"/>
    </location>
</feature>
<feature type="active site" description="Proton donor" evidence="1">
    <location>
        <position position="204"/>
    </location>
</feature>
<feature type="active site" description="Proton acceptor" evidence="1">
    <location>
        <position position="338"/>
    </location>
</feature>
<feature type="binding site" evidence="1">
    <location>
        <position position="162"/>
    </location>
    <ligand>
        <name>(2R)-2-phosphoglycerate</name>
        <dbReference type="ChEBI" id="CHEBI:58289"/>
    </ligand>
</feature>
<feature type="binding site" evidence="1">
    <location>
        <position position="241"/>
    </location>
    <ligand>
        <name>Mg(2+)</name>
        <dbReference type="ChEBI" id="CHEBI:18420"/>
    </ligand>
</feature>
<feature type="binding site" evidence="1">
    <location>
        <position position="286"/>
    </location>
    <ligand>
        <name>Mg(2+)</name>
        <dbReference type="ChEBI" id="CHEBI:18420"/>
    </ligand>
</feature>
<feature type="binding site" evidence="1">
    <location>
        <position position="313"/>
    </location>
    <ligand>
        <name>Mg(2+)</name>
        <dbReference type="ChEBI" id="CHEBI:18420"/>
    </ligand>
</feature>
<feature type="binding site" evidence="1">
    <location>
        <position position="338"/>
    </location>
    <ligand>
        <name>(2R)-2-phosphoglycerate</name>
        <dbReference type="ChEBI" id="CHEBI:58289"/>
    </ligand>
</feature>
<feature type="binding site" evidence="1">
    <location>
        <position position="367"/>
    </location>
    <ligand>
        <name>(2R)-2-phosphoglycerate</name>
        <dbReference type="ChEBI" id="CHEBI:58289"/>
    </ligand>
</feature>
<feature type="binding site" evidence="1">
    <location>
        <position position="368"/>
    </location>
    <ligand>
        <name>(2R)-2-phosphoglycerate</name>
        <dbReference type="ChEBI" id="CHEBI:58289"/>
    </ligand>
</feature>
<feature type="binding site" evidence="1">
    <location>
        <position position="389"/>
    </location>
    <ligand>
        <name>(2R)-2-phosphoglycerate</name>
        <dbReference type="ChEBI" id="CHEBI:58289"/>
    </ligand>
</feature>
<proteinExistence type="inferred from homology"/>
<organism>
    <name type="scientific">Vesicomyosocius okutanii subsp. Calyptogena okutanii (strain HA)</name>
    <dbReference type="NCBI Taxonomy" id="412965"/>
    <lineage>
        <taxon>Bacteria</taxon>
        <taxon>Pseudomonadati</taxon>
        <taxon>Pseudomonadota</taxon>
        <taxon>Gammaproteobacteria</taxon>
        <taxon>Candidatus Pseudothioglobaceae</taxon>
        <taxon>Candidatus Vesicomyosocius</taxon>
    </lineage>
</organism>